<proteinExistence type="evidence at protein level"/>
<organism>
    <name type="scientific">Candida albicans (strain SC5314 / ATCC MYA-2876)</name>
    <name type="common">Yeast</name>
    <dbReference type="NCBI Taxonomy" id="237561"/>
    <lineage>
        <taxon>Eukaryota</taxon>
        <taxon>Fungi</taxon>
        <taxon>Dikarya</taxon>
        <taxon>Ascomycota</taxon>
        <taxon>Saccharomycotina</taxon>
        <taxon>Pichiomycetes</taxon>
        <taxon>Debaryomycetaceae</taxon>
        <taxon>Candida/Lodderomyces clade</taxon>
        <taxon>Candida</taxon>
    </lineage>
</organism>
<sequence>MGRVRTKTVKRASKVLIERFYPKLTLDFETNKRLTSEIAVIQSKRLRNKIAGYTTHLMKRIQKGPVRGISFKLQEEERERKDQYVPEVSALDLSHTNGQLEIDADTADLVKSLGFKIPVQTVSISAQRGPRRFAKRN</sequence>
<feature type="chain" id="PRO_0000456555" description="Small ribosomal subunit protein eS17">
    <location>
        <begin position="1"/>
        <end position="137"/>
    </location>
</feature>
<accession>A0A1D8PEY9</accession>
<protein>
    <recommendedName>
        <fullName evidence="2">Small ribosomal subunit protein eS17</fullName>
    </recommendedName>
    <alternativeName>
        <fullName>40S ribosomal protein S17B</fullName>
    </alternativeName>
</protein>
<dbReference type="EMBL" id="CP017623">
    <property type="protein sequence ID" value="AOW26714.1"/>
    <property type="molecule type" value="Genomic_DNA"/>
</dbReference>
<dbReference type="RefSeq" id="XP_019330692.1">
    <property type="nucleotide sequence ID" value="XM_019475147.1"/>
</dbReference>
<dbReference type="PDB" id="7PZY">
    <property type="method" value="EM"/>
    <property type="resolution" value="2.32 A"/>
    <property type="chains" value="S=1-137"/>
</dbReference>
<dbReference type="PDB" id="7Q08">
    <property type="method" value="EM"/>
    <property type="resolution" value="2.56 A"/>
    <property type="chains" value="S=1-137"/>
</dbReference>
<dbReference type="PDB" id="7Q0F">
    <property type="method" value="EM"/>
    <property type="resolution" value="2.64 A"/>
    <property type="chains" value="S=1-137"/>
</dbReference>
<dbReference type="PDB" id="7Q0P">
    <property type="method" value="EM"/>
    <property type="resolution" value="2.77 A"/>
    <property type="chains" value="S=1-137"/>
</dbReference>
<dbReference type="PDB" id="7Q0R">
    <property type="method" value="EM"/>
    <property type="resolution" value="2.67 A"/>
    <property type="chains" value="S=1-137"/>
</dbReference>
<dbReference type="PDB" id="8C3A">
    <property type="method" value="X-ray"/>
    <property type="resolution" value="3.00 A"/>
    <property type="chains" value="DE/T=1-137"/>
</dbReference>
<dbReference type="PDB" id="8OGJ">
    <property type="method" value="EM"/>
    <property type="resolution" value="3.10 A"/>
    <property type="chains" value="S=1-137"/>
</dbReference>
<dbReference type="PDB" id="8OH6">
    <property type="method" value="X-ray"/>
    <property type="resolution" value="3.35 A"/>
    <property type="chains" value="DE/T=1-137"/>
</dbReference>
<dbReference type="PDB" id="8OI5">
    <property type="method" value="X-ray"/>
    <property type="resolution" value="2.90 A"/>
    <property type="chains" value="DE/T=1-137"/>
</dbReference>
<dbReference type="PDB" id="8OJ3">
    <property type="method" value="X-ray"/>
    <property type="resolution" value="3.50 A"/>
    <property type="chains" value="DE/T=1-137"/>
</dbReference>
<dbReference type="PDBsum" id="7PZY"/>
<dbReference type="PDBsum" id="7Q08"/>
<dbReference type="PDBsum" id="7Q0F"/>
<dbReference type="PDBsum" id="7Q0P"/>
<dbReference type="PDBsum" id="7Q0R"/>
<dbReference type="PDBsum" id="8C3A"/>
<dbReference type="PDBsum" id="8OGJ"/>
<dbReference type="PDBsum" id="8OH6"/>
<dbReference type="PDBsum" id="8OI5"/>
<dbReference type="PDBsum" id="8OJ3"/>
<dbReference type="EMDB" id="EMD-13737"/>
<dbReference type="EMDB" id="EMD-13741"/>
<dbReference type="EMDB" id="EMD-13744"/>
<dbReference type="EMDB" id="EMD-13749"/>
<dbReference type="EMDB" id="EMD-13750"/>
<dbReference type="SMR" id="A0A1D8PEY9"/>
<dbReference type="FunCoup" id="A0A1D8PEY9">
    <property type="interactions" value="1182"/>
</dbReference>
<dbReference type="STRING" id="237561.A0A1D8PEY9"/>
<dbReference type="EnsemblFungi" id="C1_10870W_A-T">
    <property type="protein sequence ID" value="C1_10870W_A-T-p1"/>
    <property type="gene ID" value="C1_10870W_A"/>
</dbReference>
<dbReference type="GeneID" id="30515044"/>
<dbReference type="KEGG" id="cal:CAALFM_C110870WA"/>
<dbReference type="CGD" id="CAL0000195565">
    <property type="gene designation" value="RPS17B"/>
</dbReference>
<dbReference type="VEuPathDB" id="FungiDB:C1_10870W_A"/>
<dbReference type="eggNOG" id="KOG0187">
    <property type="taxonomic scope" value="Eukaryota"/>
</dbReference>
<dbReference type="InParanoid" id="A0A1D8PEY9"/>
<dbReference type="OMA" id="MKRIQQG"/>
<dbReference type="OrthoDB" id="1727351at2759"/>
<dbReference type="Proteomes" id="UP000000559">
    <property type="component" value="Chromosome 1"/>
</dbReference>
<dbReference type="GO" id="GO:0005829">
    <property type="term" value="C:cytosol"/>
    <property type="evidence" value="ECO:0007669"/>
    <property type="project" value="UniProtKB-ARBA"/>
</dbReference>
<dbReference type="GO" id="GO:1990904">
    <property type="term" value="C:ribonucleoprotein complex"/>
    <property type="evidence" value="ECO:0007669"/>
    <property type="project" value="UniProtKB-KW"/>
</dbReference>
<dbReference type="GO" id="GO:0005840">
    <property type="term" value="C:ribosome"/>
    <property type="evidence" value="ECO:0007669"/>
    <property type="project" value="UniProtKB-KW"/>
</dbReference>
<dbReference type="GO" id="GO:0003735">
    <property type="term" value="F:structural constituent of ribosome"/>
    <property type="evidence" value="ECO:0000303"/>
    <property type="project" value="CGD"/>
</dbReference>
<dbReference type="GO" id="GO:0006412">
    <property type="term" value="P:translation"/>
    <property type="evidence" value="ECO:0000303"/>
    <property type="project" value="CGD"/>
</dbReference>
<dbReference type="FunFam" id="1.10.60.20:FF:000001">
    <property type="entry name" value="40S ribosomal protein S17"/>
    <property type="match status" value="1"/>
</dbReference>
<dbReference type="Gene3D" id="1.10.60.20">
    <property type="entry name" value="Ribosomal protein S17e-like"/>
    <property type="match status" value="1"/>
</dbReference>
<dbReference type="HAMAP" id="MF_00511">
    <property type="entry name" value="Ribosomal_eS17"/>
    <property type="match status" value="1"/>
</dbReference>
<dbReference type="InterPro" id="IPR001210">
    <property type="entry name" value="Ribosomal_eS17"/>
</dbReference>
<dbReference type="InterPro" id="IPR018273">
    <property type="entry name" value="Ribosomal_eS17_CS"/>
</dbReference>
<dbReference type="InterPro" id="IPR036401">
    <property type="entry name" value="Ribosomal_eS17_sf"/>
</dbReference>
<dbReference type="NCBIfam" id="NF002242">
    <property type="entry name" value="PRK01151.1"/>
    <property type="match status" value="1"/>
</dbReference>
<dbReference type="PANTHER" id="PTHR10732">
    <property type="entry name" value="40S RIBOSOMAL PROTEIN S17"/>
    <property type="match status" value="1"/>
</dbReference>
<dbReference type="PANTHER" id="PTHR10732:SF0">
    <property type="entry name" value="40S RIBOSOMAL PROTEIN S17"/>
    <property type="match status" value="1"/>
</dbReference>
<dbReference type="Pfam" id="PF00833">
    <property type="entry name" value="Ribosomal_S17e"/>
    <property type="match status" value="1"/>
</dbReference>
<dbReference type="SUPFAM" id="SSF116820">
    <property type="entry name" value="Rps17e-like"/>
    <property type="match status" value="1"/>
</dbReference>
<dbReference type="PROSITE" id="PS00712">
    <property type="entry name" value="RIBOSOMAL_S17E"/>
    <property type="match status" value="1"/>
</dbReference>
<evidence type="ECO:0000269" key="1">
    <source>
    </source>
</evidence>
<evidence type="ECO:0000303" key="2">
    <source>
    </source>
</evidence>
<evidence type="ECO:0000305" key="3"/>
<evidence type="ECO:0000305" key="4">
    <source>
    </source>
</evidence>
<evidence type="ECO:0007744" key="5">
    <source>
        <dbReference type="PDB" id="7PZY"/>
    </source>
</evidence>
<evidence type="ECO:0007744" key="6">
    <source>
        <dbReference type="PDB" id="7Q0F"/>
    </source>
</evidence>
<evidence type="ECO:0007744" key="7">
    <source>
        <dbReference type="PDB" id="7Q0P"/>
    </source>
</evidence>
<name>RS17B_CANAL</name>
<reference key="1">
    <citation type="journal article" date="2004" name="Proc. Natl. Acad. Sci. U.S.A.">
        <title>The diploid genome sequence of Candida albicans.</title>
        <authorList>
            <person name="Jones T."/>
            <person name="Federspiel N.A."/>
            <person name="Chibana H."/>
            <person name="Dungan J."/>
            <person name="Kalman S."/>
            <person name="Magee B.B."/>
            <person name="Newport G."/>
            <person name="Thorstenson Y.R."/>
            <person name="Agabian N."/>
            <person name="Magee P.T."/>
            <person name="Davis R.W."/>
            <person name="Scherer S."/>
        </authorList>
    </citation>
    <scope>NUCLEOTIDE SEQUENCE [LARGE SCALE GENOMIC DNA]</scope>
    <source>
        <strain>SC5314 / ATCC MYA-2876</strain>
    </source>
</reference>
<reference key="2">
    <citation type="journal article" date="2007" name="Genome Biol.">
        <title>Assembly of the Candida albicans genome into sixteen supercontigs aligned on the eight chromosomes.</title>
        <authorList>
            <person name="van het Hoog M."/>
            <person name="Rast T.J."/>
            <person name="Martchenko M."/>
            <person name="Grindle S."/>
            <person name="Dignard D."/>
            <person name="Hogues H."/>
            <person name="Cuomo C."/>
            <person name="Berriman M."/>
            <person name="Scherer S."/>
            <person name="Magee B.B."/>
            <person name="Whiteway M."/>
            <person name="Chibana H."/>
            <person name="Nantel A."/>
            <person name="Magee P.T."/>
        </authorList>
    </citation>
    <scope>GENOME REANNOTATION</scope>
    <source>
        <strain>SC5314 / ATCC MYA-2876</strain>
    </source>
</reference>
<reference key="3">
    <citation type="journal article" date="2013" name="Genome Biol.">
        <title>Assembly of a phased diploid Candida albicans genome facilitates allele-specific measurements and provides a simple model for repeat and indel structure.</title>
        <authorList>
            <person name="Muzzey D."/>
            <person name="Schwartz K."/>
            <person name="Weissman J.S."/>
            <person name="Sherlock G."/>
        </authorList>
    </citation>
    <scope>NUCLEOTIDE SEQUENCE [LARGE SCALE GENOMIC DNA]</scope>
    <scope>GENOME REANNOTATION</scope>
    <source>
        <strain>SC5314 / ATCC MYA-2876</strain>
    </source>
</reference>
<reference evidence="5 6 7" key="4">
    <citation type="journal article" date="2022" name="Sci. Adv.">
        <title>E-site drug specificity of the human pathogen Candida albicans ribosome.</title>
        <authorList>
            <person name="Zgadzay Y."/>
            <person name="Kolosova O."/>
            <person name="Stetsenko A."/>
            <person name="Wu C."/>
            <person name="Bruchlen D."/>
            <person name="Usachev K."/>
            <person name="Validov S."/>
            <person name="Jenner L."/>
            <person name="Rogachev A."/>
            <person name="Yusupova G."/>
            <person name="Sachs M.S."/>
            <person name="Guskov A."/>
            <person name="Yusupov M."/>
        </authorList>
    </citation>
    <scope>STRUCTURE BY ELECTRON MICROSCOPY (2.32 ANGSTROMS) OF THE 80S RIBOSOME</scope>
    <scope>SUBUNIT</scope>
</reference>
<keyword id="KW-0002">3D-structure</keyword>
<keyword id="KW-0963">Cytoplasm</keyword>
<keyword id="KW-1185">Reference proteome</keyword>
<keyword id="KW-0687">Ribonucleoprotein</keyword>
<keyword id="KW-0689">Ribosomal protein</keyword>
<comment type="function">
    <text evidence="4">Component of the ribosome, a large ribonucleoprotein complex responsible for the synthesis of proteins in the cell. The small ribosomal subunit (SSU) binds messenger RNAs (mRNAs) and translates the encoded message by selecting cognate aminoacyl-transfer RNA (tRNA) molecules. The large subunit (LSU) contains the ribosomal catalytic site termed the peptidyl transferase center (PTC), which catalyzes the formation of peptide bonds, thereby polymerizing the amino acids delivered by tRNAs into a polypeptide chain. The nascent polypeptides leave the ribosome through a tunnel in the LSU and interact with protein factors that function in enzymatic processing, targeting, and the membrane insertion of nascent chains at the exit of the ribosomal tunnel.</text>
</comment>
<comment type="subunit">
    <text evidence="1">Component of the small ribosomal subunit (PubMed:35613268). Mature ribosomes consist of a small (40S) and a large (60S) subunit (PubMed:35613268). The 40S subunit contains about 32 different proteins and 1 molecule of RNA (18S) (PubMed:35613268). The 60S subunit contains 45 different proteins and 3 molecules of RNA (25S, 5.8S and 5S) (PubMed:35613268).</text>
</comment>
<comment type="subcellular location">
    <subcellularLocation>
        <location evidence="4">Cytoplasm</location>
    </subcellularLocation>
</comment>
<comment type="similarity">
    <text evidence="3">Belongs to the eukaryotic ribosomal protein eS17 family.</text>
</comment>
<gene>
    <name type="primary">RPS17B</name>
    <name type="ordered locus">orf19.2329.1</name>
    <name type="ORF">CAALFM_C110870WA</name>
</gene>